<sequence>MTHSNATRVLVFGDQTYDFVPKLRELFHVKDNPILTAFLEQSHYVVRAQMIQTLPPAEHKAARTFDLADMLKKYVAGKLNPAFQTALSCITQLGVFMREFHDFTKPYPRHDSSYVLGICTGSLAAAAVSSSNSLSELLPIAVQTALIAFRLGLCVTDMRDRLESSEEDRTQPWSVVLFDTDEQTVTKAIKDFCTSNVLPKTKQPWITSASSKTITISGAPRVLKKLSQEPALKDKKTRQIPIYVPAHNSALFTPEDVKSILETTPVDTWSNYPTKLPFISSVSGKMAWADNYLAVIHLALNQCLLESIGWGKVETELPRLLKSRGAENVLITPITTSADRALSAALSPTISNIEVEKPTINESFAHRPGSGKSKLAIVSMSGRFPEAQSTDAFWDLLYKGLDVVKEVPKRRWDVETHVDPTGRARNKGATKWGCWLDFAGEFDPRFFSISPKEAPQMDPAQRMALMSTWEAMERGGIVPDTTPSTQRNRIGVFHGVTSNDWMETNTAQNIDTYFITGGNRGFIPGRINFCFEFSGPSFTNDTACSSSLAAIHLACNSLWRGDCDTAVAGGTNMIFTPDGHAGLDKGFFLSRTGNCKPFDDKADGYCRAEGVGTVMVKRLEDALADGDPILGTILDAKTNHSAMSDSMTRPFVPAQIDNMEACLSTAGVDPTSLDYIEMHGTGTQVGDAVEMESVLSVFAPNEQFRGKDQPLYVGSAKANIGHGEGVSGVTSLIKVLLMMQNNTIPPHCGIKPGSKINHNYPDLAARNVHIAFEPKPFLRREGKLRRVLINNFSAAGGNTALLIEDAPDRMPLSGQDPRTTQTVTISGHVGKSLSNNVANLLAHLKKNPTIDLSQLAYTVSARRWHHLHRVAVAGTTVADITAKLEKAIENKEGVNRPKAKPSVFFAFTGQGSQYLGMGKQLYDSYPMFRSELQGYDRLAQSQGFPSFAHIFTETKGDVEQNLPVVVQLAITCLQMALFNLVTSFGIKASAVVGHSLGEYAALYAAGVLSASDTIYLVGKRAELLQDHCQRGTHAMLACKASEWSLAEITAGKNVEVACVNGPEDTVLSGTVEEIGEVQKTLSAKSIKATLLKLPFAFHSAQVQPILEDFEELAAGATFEKPKLAVISPLLGSVVEDEGVVGPNYLARHCREAVGMVKALGVAKEKGIINEKTIVIEIGPKPLLCGMIKNILGQNIVALPTLKDKGPDVWQNLSNIFTTLYTGGLDINWTAFHAPFEPAKKVLQLPDYGWDLKDYFIQYEGDWVLHRHKIHCNCADAGKDVHNTSHYCPGKHTFAENVVVPGGAQKAVQEAPAAKTETKKMSKLDPTKEAYPGIPLTTTVHKVIEEKTEPLGAQFTVETDISRKDVNSIAQGHTVDSIPLCTPSFYADIALQVGKYAMDRIRAGHPGAGAIDGRVDVTDLVVDKALIPHGKAPQLLRTNVTMSWPPKMAATTRSAKVTFKTYTADGKLDTDHAYCTVRFTTDSQQKSLQKKVPEYKAAIAKLRARDAKGELTHYNTKSGYKLMSSMAHFHPDYKLLDNLVLNEAENEAVSVMNFSSCTDAGIYAAHPAYVDAITQVGGFAMNAKDDTDIDKEVYVNHGWESFQVYKKMEKSVEYVVYSKMTKDPKGDMVHGDTIVLDGDEVVAFFRGLSLRSVPRKALRAVLQSAMDKGIRQRGGKPGAAKGAVAAPAPAKKMVEPVKAASKKETPAAAAPPSPSKAAPPPAPKPAALKASVPKADPGKVDEALKIISEESGIALDELTDDSNFTDMGVDSLSSMVITSRLREDLELDLAPDFALFADCPTVASLRTFLAGAAGGPTDSPAAIATLEFGEPTPAKELEAGPALKSTPISPGVQALQPVPAPTPAPKPVITSPAAPVSSKVFDDALQIISEESGIALDELTDDSNFTDMGVDSLSSMVITSRLREDLELDLSPDWALFADCPTVASLRSFLGGSGPGSTAPADADTPVDTTAAEIEAPVPNEAASYMPNSSQADVDDAVAAVIGNDPPRRPEPPKQAAAPAVARTEALNAALDIIAEESGVAAEDFTDDTIFSDIGIDSLCSMVISSRFREELELDLDSQFSLFVDLPTVAQLREFLTGSSADSDSSSVASNPADPAATPPRSESSDTEPDDEAPSKPKSGPGSTDSCRSTNSVILQGKPKTAAKTLFLLPDGGGSASSYSVIPKLQSDVAVVGINCPYARDPENMTCTWQAMMQSFINEIKRRQPKGPYHLGGWSSGGAFAYVTAEKMIKQGDEVGSLFIFDAPVPQVMEKLPREFYEAVNFTESTAVGTAEPPPYLIPHFMAVVDVMLDYKCKPLQTKKMPNVGLIWADSTVMKEDEAPKMKGMHFMIQKRTNFGPDGWDEVCPGAKFEIVKAVDTNHFTLMTKARVNYVSDLIDKVMG</sequence>
<organism>
    <name type="scientific">Dothistroma septosporum (strain NZE10 / CBS 128990)</name>
    <name type="common">Red band needle blight fungus</name>
    <name type="synonym">Mycosphaerella pini</name>
    <dbReference type="NCBI Taxonomy" id="675120"/>
    <lineage>
        <taxon>Eukaryota</taxon>
        <taxon>Fungi</taxon>
        <taxon>Dikarya</taxon>
        <taxon>Ascomycota</taxon>
        <taxon>Pezizomycotina</taxon>
        <taxon>Dothideomycetes</taxon>
        <taxon>Dothideomycetidae</taxon>
        <taxon>Mycosphaerellales</taxon>
        <taxon>Mycosphaerellaceae</taxon>
        <taxon>Dothistroma</taxon>
    </lineage>
</organism>
<reference key="1">
    <citation type="journal article" date="2012" name="PLoS Genet.">
        <title>The genomes of the fungal plant pathogens Cladosporium fulvum and Dothistroma septosporum reveal adaptation to different hosts and lifestyles but also signatures of common ancestry.</title>
        <authorList>
            <person name="de Wit P.J.G.M."/>
            <person name="van der Burgt A."/>
            <person name="Oekmen B."/>
            <person name="Stergiopoulos I."/>
            <person name="Abd-Elsalam K.A."/>
            <person name="Aerts A.L."/>
            <person name="Bahkali A.H."/>
            <person name="Beenen H.G."/>
            <person name="Chettri P."/>
            <person name="Cox M.P."/>
            <person name="Datema E."/>
            <person name="de Vries R.P."/>
            <person name="Dhillon B."/>
            <person name="Ganley A.R."/>
            <person name="Griffiths S.A."/>
            <person name="Guo Y."/>
            <person name="Hamelin R.C."/>
            <person name="Henrissat B."/>
            <person name="Kabir M.S."/>
            <person name="Jashni M.K."/>
            <person name="Kema G."/>
            <person name="Klaubauf S."/>
            <person name="Lapidus A."/>
            <person name="Levasseur A."/>
            <person name="Lindquist E."/>
            <person name="Mehrabi R."/>
            <person name="Ohm R.A."/>
            <person name="Owen T.J."/>
            <person name="Salamov A."/>
            <person name="Schwelm A."/>
            <person name="Schijlen E."/>
            <person name="Sun H."/>
            <person name="van den Burg H.A."/>
            <person name="van Ham R.C.H.J."/>
            <person name="Zhang S."/>
            <person name="Goodwin S.B."/>
            <person name="Grigoriev I.V."/>
            <person name="Collemare J."/>
            <person name="Bradshaw R.E."/>
        </authorList>
    </citation>
    <scope>NUCLEOTIDE SEQUENCE [LARGE SCALE GENOMIC DNA]</scope>
    <source>
        <strain>NZE10 / CBS 128990</strain>
    </source>
</reference>
<reference key="2">
    <citation type="journal article" date="2012" name="PLoS Pathog.">
        <title>Diverse lifestyles and strategies of plant pathogenesis encoded in the genomes of eighteen Dothideomycetes fungi.</title>
        <authorList>
            <person name="Ohm R.A."/>
            <person name="Feau N."/>
            <person name="Henrissat B."/>
            <person name="Schoch C.L."/>
            <person name="Horwitz B.A."/>
            <person name="Barry K.W."/>
            <person name="Condon B.J."/>
            <person name="Copeland A.C."/>
            <person name="Dhillon B."/>
            <person name="Glaser F."/>
            <person name="Hesse C.N."/>
            <person name="Kosti I."/>
            <person name="LaButti K."/>
            <person name="Lindquist E.A."/>
            <person name="Lucas S."/>
            <person name="Salamov A.A."/>
            <person name="Bradshaw R.E."/>
            <person name="Ciuffetti L."/>
            <person name="Hamelin R.C."/>
            <person name="Kema G.H.J."/>
            <person name="Lawrence C."/>
            <person name="Scott J.A."/>
            <person name="Spatafora J.W."/>
            <person name="Turgeon B.G."/>
            <person name="de Wit P.J.G.M."/>
            <person name="Zhong S."/>
            <person name="Goodwin S.B."/>
            <person name="Grigoriev I.V."/>
        </authorList>
    </citation>
    <scope>NUCLEOTIDE SEQUENCE [LARGE SCALE GENOMIC DNA]</scope>
    <source>
        <strain>NZE10 / CBS 128990</strain>
    </source>
</reference>
<reference key="3">
    <citation type="journal article" date="2002" name="Appl. Environ. Microbiol.">
        <title>Dothistroma pini, a forest pathogen, contains homologs of aflatoxin biosynthetic pathway genes.</title>
        <authorList>
            <person name="Bradshaw R.E."/>
            <person name="Bhatnagar D."/>
            <person name="Ganley R.J."/>
            <person name="Gillman C.J."/>
            <person name="Monahan B.J."/>
            <person name="Seconi J.M."/>
        </authorList>
    </citation>
    <scope>FUNCTION</scope>
</reference>
<reference key="4">
    <citation type="journal article" date="2006" name="Mycopathologia">
        <title>A polyketide synthase gene required for biosynthesis of the aflatoxin-like toxin, dothistromin.</title>
        <authorList>
            <person name="Bradshaw R.E."/>
            <person name="Jin H."/>
            <person name="Morgan B.S."/>
            <person name="Schwelm A."/>
            <person name="Teddy O.R."/>
            <person name="Young C.A."/>
            <person name="Zhang S."/>
        </authorList>
    </citation>
    <scope>FUNCTION</scope>
    <scope>DISRUPTION PHENOTYPE</scope>
</reference>
<reference key="5">
    <citation type="journal article" date="2007" name="Fungal Genet. Biol.">
        <title>A fragmented aflatoxin-like gene cluster in the forest pathogen Dothistroma septosporum.</title>
        <authorList>
            <person name="Zhang S."/>
            <person name="Schwelm A."/>
            <person name="Jin H."/>
            <person name="Collins L.J."/>
            <person name="Bradshaw R.E."/>
        </authorList>
    </citation>
    <scope>FUNCTION</scope>
    <scope>INDUCTION</scope>
</reference>
<reference key="6">
    <citation type="journal article" date="2008" name="Mycol. Res.">
        <title>Early expression of aflatoxin-like dothistromin genes in the forest pathogen Dothistroma septosporum.</title>
        <authorList>
            <person name="Schwelm A."/>
            <person name="Barron N.J."/>
            <person name="Zhang S."/>
            <person name="Bradshaw R.E."/>
        </authorList>
    </citation>
    <scope>INDUCTION</scope>
</reference>
<reference key="7">
    <citation type="journal article" date="2010" name="Toxins">
        <title>Genetics of dothistromin biosynthesis of Dothistroma septosporum: an update.</title>
        <authorList>
            <person name="Schwelm A."/>
            <person name="Bradshaw R.E."/>
        </authorList>
    </citation>
    <scope>REVIEW ON FUNCTION</scope>
    <scope>PATHWAY</scope>
</reference>
<reference key="8">
    <citation type="journal article" date="2013" name="Fungal Genet. Biol.">
        <title>Dothistromin genes at multiple separate loci are regulated by AflR.</title>
        <authorList>
            <person name="Chettri P."/>
            <person name="Ehrlich K.C."/>
            <person name="Cary J.W."/>
            <person name="Collemare J."/>
            <person name="Cox M.P."/>
            <person name="Griffiths S.A."/>
            <person name="Olson M.A."/>
            <person name="de Wit P.J."/>
            <person name="Bradshaw R.E."/>
        </authorList>
    </citation>
    <scope>FUNCTION</scope>
    <scope>INDUCTION</scope>
    <scope>PATHWAY</scope>
</reference>
<reference key="9">
    <citation type="journal article" date="2013" name="New Phytol.">
        <title>Fragmentation of an aflatoxin-like gene cluster in a forest pathogen.</title>
        <authorList>
            <person name="Bradshaw R.E."/>
            <person name="Slot J.C."/>
            <person name="Moore G.G."/>
            <person name="Chettri P."/>
            <person name="de Wit P.J."/>
            <person name="Ehrlich K.C."/>
            <person name="Ganley A.R."/>
            <person name="Olson M.A."/>
            <person name="Rokas A."/>
            <person name="Carbone I."/>
            <person name="Cox M.P."/>
        </authorList>
    </citation>
    <scope>FUNCTION</scope>
</reference>
<reference key="10">
    <citation type="journal article" date="2015" name="Fungal Biol.">
        <title>Regulation of the aflatoxin-like toxin dothistromin by AflJ.</title>
        <authorList>
            <person name="Chettri P."/>
            <person name="Ehrlich K.C."/>
            <person name="Bradshaw R.E."/>
        </authorList>
    </citation>
    <scope>INDUCTION</scope>
</reference>
<reference key="11">
    <citation type="journal article" date="2019" name="Fungal Biol.">
        <title>Evolutionary relics dominate the small number of secondary metabolism genes in the hemibiotrophic fungus Dothistroma septosporum.</title>
        <authorList>
            <person name="Ozturk I.K."/>
            <person name="Dupont P.Y."/>
            <person name="Chettri P."/>
            <person name="McDougal R."/>
            <person name="Boehl O.J."/>
            <person name="Cox R.J."/>
            <person name="Bradshaw R.E."/>
        </authorList>
    </citation>
    <scope>INDUCTION</scope>
</reference>
<accession>M2XHZ5</accession>
<proteinExistence type="evidence at transcript level"/>
<keyword id="KW-0012">Acyltransferase</keyword>
<keyword id="KW-0511">Multifunctional enzyme</keyword>
<keyword id="KW-0596">Phosphopantetheine</keyword>
<keyword id="KW-0597">Phosphoprotein</keyword>
<keyword id="KW-1185">Reference proteome</keyword>
<keyword id="KW-0677">Repeat</keyword>
<keyword id="KW-0808">Transferase</keyword>
<dbReference type="EC" id="2.3.1.221" evidence="2"/>
<dbReference type="EMBL" id="KB446546">
    <property type="protein sequence ID" value="EME39092.1"/>
    <property type="molecule type" value="Genomic_DNA"/>
</dbReference>
<dbReference type="SMR" id="M2XHZ5"/>
<dbReference type="STRING" id="675120.M2XHZ5"/>
<dbReference type="ESTHER" id="mycpj-q30dw8">
    <property type="family name" value="Epoxide_hydrolase"/>
</dbReference>
<dbReference type="EnsemblFungi" id="EME39092">
    <property type="protein sequence ID" value="EME39092"/>
    <property type="gene ID" value="DOTSEDRAFT_192192"/>
</dbReference>
<dbReference type="eggNOG" id="KOG1202">
    <property type="taxonomic scope" value="Eukaryota"/>
</dbReference>
<dbReference type="HOGENOM" id="CLU_000022_6_0_1"/>
<dbReference type="OMA" id="KWGCWLD"/>
<dbReference type="OrthoDB" id="329835at2759"/>
<dbReference type="Proteomes" id="UP000016933">
    <property type="component" value="Unassembled WGS sequence"/>
</dbReference>
<dbReference type="GO" id="GO:0004312">
    <property type="term" value="F:fatty acid synthase activity"/>
    <property type="evidence" value="ECO:0007669"/>
    <property type="project" value="TreeGrafter"/>
</dbReference>
<dbReference type="GO" id="GO:0102973">
    <property type="term" value="F:norsolorinate anthrone synthase activity"/>
    <property type="evidence" value="ECO:0007669"/>
    <property type="project" value="UniProtKB-EC"/>
</dbReference>
<dbReference type="GO" id="GO:0031177">
    <property type="term" value="F:phosphopantetheine binding"/>
    <property type="evidence" value="ECO:0007669"/>
    <property type="project" value="InterPro"/>
</dbReference>
<dbReference type="GO" id="GO:0006633">
    <property type="term" value="P:fatty acid biosynthetic process"/>
    <property type="evidence" value="ECO:0007669"/>
    <property type="project" value="TreeGrafter"/>
</dbReference>
<dbReference type="GO" id="GO:0044550">
    <property type="term" value="P:secondary metabolite biosynthetic process"/>
    <property type="evidence" value="ECO:0007669"/>
    <property type="project" value="TreeGrafter"/>
</dbReference>
<dbReference type="CDD" id="cd00833">
    <property type="entry name" value="PKS"/>
    <property type="match status" value="1"/>
</dbReference>
<dbReference type="FunFam" id="3.40.366.10:FF:000002">
    <property type="entry name" value="Probable polyketide synthase 2"/>
    <property type="match status" value="1"/>
</dbReference>
<dbReference type="FunFam" id="1.10.1200.10:FF:000011">
    <property type="entry name" value="Sterigmatocystin biosynthesis polyketide synthase"/>
    <property type="match status" value="3"/>
</dbReference>
<dbReference type="FunFam" id="3.10.129.110:FF:000001">
    <property type="entry name" value="Sterigmatocystin biosynthesis polyketide synthase"/>
    <property type="match status" value="1"/>
</dbReference>
<dbReference type="FunFam" id="3.40.47.10:FF:000031">
    <property type="entry name" value="Sterigmatocystin biosynthesis polyketide synthase"/>
    <property type="match status" value="1"/>
</dbReference>
<dbReference type="FunFam" id="3.40.50.1820:FF:000116">
    <property type="entry name" value="Sterigmatocystin biosynthesis polyketide synthase"/>
    <property type="match status" value="1"/>
</dbReference>
<dbReference type="Gene3D" id="3.30.70.3290">
    <property type="match status" value="1"/>
</dbReference>
<dbReference type="Gene3D" id="3.40.47.10">
    <property type="match status" value="1"/>
</dbReference>
<dbReference type="Gene3D" id="1.10.1200.10">
    <property type="entry name" value="ACP-like"/>
    <property type="match status" value="3"/>
</dbReference>
<dbReference type="Gene3D" id="3.40.50.1820">
    <property type="entry name" value="alpha/beta hydrolase"/>
    <property type="match status" value="1"/>
</dbReference>
<dbReference type="Gene3D" id="3.30.70.250">
    <property type="entry name" value="Malonyl-CoA ACP transacylase, ACP-binding"/>
    <property type="match status" value="1"/>
</dbReference>
<dbReference type="Gene3D" id="3.40.366.10">
    <property type="entry name" value="Malonyl-Coenzyme A Acyl Carrier Protein, domain 2"/>
    <property type="match status" value="2"/>
</dbReference>
<dbReference type="Gene3D" id="3.10.129.110">
    <property type="entry name" value="Polyketide synthase dehydratase"/>
    <property type="match status" value="1"/>
</dbReference>
<dbReference type="InterPro" id="IPR029058">
    <property type="entry name" value="AB_hydrolase_fold"/>
</dbReference>
<dbReference type="InterPro" id="IPR001227">
    <property type="entry name" value="Ac_transferase_dom_sf"/>
</dbReference>
<dbReference type="InterPro" id="IPR036736">
    <property type="entry name" value="ACP-like_sf"/>
</dbReference>
<dbReference type="InterPro" id="IPR014043">
    <property type="entry name" value="Acyl_transferase_dom"/>
</dbReference>
<dbReference type="InterPro" id="IPR016035">
    <property type="entry name" value="Acyl_Trfase/lysoPLipase"/>
</dbReference>
<dbReference type="InterPro" id="IPR014031">
    <property type="entry name" value="Ketoacyl_synth_C"/>
</dbReference>
<dbReference type="InterPro" id="IPR014030">
    <property type="entry name" value="Ketoacyl_synth_N"/>
</dbReference>
<dbReference type="InterPro" id="IPR016036">
    <property type="entry name" value="Malonyl_transacylase_ACP-bd"/>
</dbReference>
<dbReference type="InterPro" id="IPR020841">
    <property type="entry name" value="PKS_Beta-ketoAc_synthase_dom"/>
</dbReference>
<dbReference type="InterPro" id="IPR042104">
    <property type="entry name" value="PKS_dehydratase_sf"/>
</dbReference>
<dbReference type="InterPro" id="IPR049551">
    <property type="entry name" value="PKS_DH_C"/>
</dbReference>
<dbReference type="InterPro" id="IPR049900">
    <property type="entry name" value="PKS_mFAS_DH"/>
</dbReference>
<dbReference type="InterPro" id="IPR050091">
    <property type="entry name" value="PKS_NRPS_Biosynth_Enz"/>
</dbReference>
<dbReference type="InterPro" id="IPR020806">
    <property type="entry name" value="PKS_PP-bd"/>
</dbReference>
<dbReference type="InterPro" id="IPR009081">
    <property type="entry name" value="PP-bd_ACP"/>
</dbReference>
<dbReference type="InterPro" id="IPR030918">
    <property type="entry name" value="PT_fungal_PKS"/>
</dbReference>
<dbReference type="InterPro" id="IPR032088">
    <property type="entry name" value="SAT"/>
</dbReference>
<dbReference type="InterPro" id="IPR001031">
    <property type="entry name" value="Thioesterase"/>
</dbReference>
<dbReference type="InterPro" id="IPR016039">
    <property type="entry name" value="Thiolase-like"/>
</dbReference>
<dbReference type="NCBIfam" id="TIGR04532">
    <property type="entry name" value="PT_fungal_PKS"/>
    <property type="match status" value="1"/>
</dbReference>
<dbReference type="PANTHER" id="PTHR43775">
    <property type="entry name" value="FATTY ACID SYNTHASE"/>
    <property type="match status" value="1"/>
</dbReference>
<dbReference type="PANTHER" id="PTHR43775:SF40">
    <property type="entry name" value="NORSOLORINIC ACID SYNTHASE STCA"/>
    <property type="match status" value="1"/>
</dbReference>
<dbReference type="Pfam" id="PF00698">
    <property type="entry name" value="Acyl_transf_1"/>
    <property type="match status" value="1"/>
</dbReference>
<dbReference type="Pfam" id="PF22621">
    <property type="entry name" value="CurL-like_PKS_C"/>
    <property type="match status" value="1"/>
</dbReference>
<dbReference type="Pfam" id="PF00109">
    <property type="entry name" value="ketoacyl-synt"/>
    <property type="match status" value="1"/>
</dbReference>
<dbReference type="Pfam" id="PF02801">
    <property type="entry name" value="Ketoacyl-synt_C"/>
    <property type="match status" value="1"/>
</dbReference>
<dbReference type="Pfam" id="PF00550">
    <property type="entry name" value="PP-binding"/>
    <property type="match status" value="3"/>
</dbReference>
<dbReference type="Pfam" id="PF14765">
    <property type="entry name" value="PS-DH"/>
    <property type="match status" value="1"/>
</dbReference>
<dbReference type="Pfam" id="PF16073">
    <property type="entry name" value="SAT"/>
    <property type="match status" value="1"/>
</dbReference>
<dbReference type="Pfam" id="PF00975">
    <property type="entry name" value="Thioesterase"/>
    <property type="match status" value="1"/>
</dbReference>
<dbReference type="SMART" id="SM00827">
    <property type="entry name" value="PKS_AT"/>
    <property type="match status" value="1"/>
</dbReference>
<dbReference type="SMART" id="SM00825">
    <property type="entry name" value="PKS_KS"/>
    <property type="match status" value="1"/>
</dbReference>
<dbReference type="SMART" id="SM00823">
    <property type="entry name" value="PKS_PP"/>
    <property type="match status" value="3"/>
</dbReference>
<dbReference type="SUPFAM" id="SSF47336">
    <property type="entry name" value="ACP-like"/>
    <property type="match status" value="3"/>
</dbReference>
<dbReference type="SUPFAM" id="SSF53474">
    <property type="entry name" value="alpha/beta-Hydrolases"/>
    <property type="match status" value="1"/>
</dbReference>
<dbReference type="SUPFAM" id="SSF52151">
    <property type="entry name" value="FabD/lysophospholipase-like"/>
    <property type="match status" value="1"/>
</dbReference>
<dbReference type="SUPFAM" id="SSF55048">
    <property type="entry name" value="Probable ACP-binding domain of malonyl-CoA ACP transacylase"/>
    <property type="match status" value="1"/>
</dbReference>
<dbReference type="SUPFAM" id="SSF53901">
    <property type="entry name" value="Thiolase-like"/>
    <property type="match status" value="1"/>
</dbReference>
<dbReference type="PROSITE" id="PS50075">
    <property type="entry name" value="CARRIER"/>
    <property type="match status" value="3"/>
</dbReference>
<dbReference type="PROSITE" id="PS52004">
    <property type="entry name" value="KS3_2"/>
    <property type="match status" value="1"/>
</dbReference>
<dbReference type="PROSITE" id="PS52019">
    <property type="entry name" value="PKS_MFAS_DH"/>
    <property type="match status" value="1"/>
</dbReference>
<comment type="function">
    <text evidence="2 8 9 16 18 19 20">Polyketide synthase; part of the fragmented gene cluster that mediates the biosynthesis of dothistromin (DOTH), a polyketide toxin very similar in structure to the aflatoxin precursor, versicolorin B (PubMed:12039746, PubMed:17683963, PubMed:22069571, PubMed:23207690, PubMed:23448391). The first step of the pathway is the conversion of acetate to norsolorinic acid (NOR) and requires the fatty acid synthase subunits hexA and hexB, as well as the polyketide synthase pksA (PubMed:16649078, PubMed:23207690). PksA combines a hexanoyl starter unit and 7 malonyl-CoA extender units to synthesize the precursor NOR (By similarity). The hexanoyl starter unit is provided to the acyl-carrier protein (ACP) domain by the fungal fatty acid synthase hexA/hexB (By similarity). The second step is the conversion of NOR to averantin (AVN) and requires the norsolorinic acid ketoreductase nor1, which catalyzes the dehydration of norsolorinic acid to form (1'S)-averantin (PubMed:23207690). The cytochrome P450 monooxygenase avnA then catalyzes the hydroxylation of AVN to 5'hydroxyaverantin (HAVN) (PubMed:23207690). The next step is performed by adhA that transforms HAVN to averufin (AVF) (PubMed:23207690). Averufin might then be converted to hydroxyversicolorone by cypX and avfA (PubMed:23207690). Hydroxyversicolorone is further converted versiconal hemiacetal acetate (VHA) by moxY (PubMed:23207690). VHA is then the substrate for the versiconal hemiacetal acetate esterase est1 to yield versiconal (VAL) (PubMed:23207690). Versicolorin B synthase vbsA then converts VAL to versicolorin B (VERB) by closing the bisfuran ring (PubMed:16649078, PubMed:23207690). Then, the activity of the versicolorin B desaturase verB leads to versicolorin A (VERA) (PubMed:23207690). DotB, a predicted chloroperoxidase, may perform epoxidation of the A-ring of VERA (PubMed:23207690). Alternatively, a cytochrome P450, such as cypX or avnA could catalyze this step (PubMed:23207690). It is also possible that another, uncharacterized, cytochrome P450 enzyme is responsible for this step (PubMed:23207690). Opening of the epoxide could potentially be achieved by the epoxide hydrolase epoA (PubMed:23207690). However, epoA seems not to be required for DOTH biosynthesis, but other epoxide hydrolases may have the ability to complement this hydrolysis (PubMed:23207690). Alternatively, opening of the epoxide ring could be achieved non-enzymatically (PubMed:23207690). The next step is the deoxygenation of ring A to yield the 5,8-dihydroxyanthraquinone which is most likely catalyzed by the NADPH dehydrogenase encoded by ver1 (PubMed:23207690). The last stages of DOTH biosynthesis are proposed to involve hydroxylation of the bisfuran (PubMed:23207690). OrdB and norB might have oxidative roles here (PubMed:23207690). An alternative possibility is that cytochrome P450 monoogenases such as avnA and cypX might perform these steps in addition to previously proposed steps (PubMed:23207690).</text>
</comment>
<comment type="catalytic activity">
    <reaction evidence="2">
        <text>hexanoyl-[ACP] + 7 malonyl-CoA + 6 H(+) = noranthrone + holo-[ACP] + 7 CO2 + 7 CoA + 2 H2O</text>
        <dbReference type="Rhea" id="RHEA:35179"/>
        <dbReference type="Rhea" id="RHEA-COMP:9632"/>
        <dbReference type="Rhea" id="RHEA-COMP:9685"/>
        <dbReference type="ChEBI" id="CHEBI:15377"/>
        <dbReference type="ChEBI" id="CHEBI:15378"/>
        <dbReference type="ChEBI" id="CHEBI:16526"/>
        <dbReference type="ChEBI" id="CHEBI:57287"/>
        <dbReference type="ChEBI" id="CHEBI:57384"/>
        <dbReference type="ChEBI" id="CHEBI:64479"/>
        <dbReference type="ChEBI" id="CHEBI:77904"/>
        <dbReference type="ChEBI" id="CHEBI:78459"/>
        <dbReference type="EC" id="2.3.1.221"/>
    </reaction>
</comment>
<comment type="cofactor">
    <cofactor evidence="2">
        <name>pantetheine 4'-phosphate</name>
        <dbReference type="ChEBI" id="CHEBI:47942"/>
    </cofactor>
    <text evidence="2">Binds 1 phosphopantetheine covalently.</text>
</comment>
<comment type="pathway">
    <text evidence="16 19">Mycotoxin biosynthesis.</text>
</comment>
<comment type="induction">
    <text evidence="10 11 12 13 14">Shows highest expression in the mid and late stages of infection in planta (PubMed:31053329). Expression is positively regulated by the dothistromin-specific transcription factors aflR and aflJ (PubMed:23207690, PubMed:25986547). Dothistromin biosynthetic proteins are co-regulated, showing a high level of expression at ealy exponential phase with a subsequent decline in older cultures (PubMed:17683963, PubMed:18262779).</text>
</comment>
<comment type="domain">
    <text evidence="17">The domain architecture includes starter unit:ACP transacylase (SAT), beta-ketoacyl synthase (KS), malonyl-CoA:ACP transacylase (MAT), product template (PT), 3 acyl-carrier domain (ACP), and thioesterase/Claisen cyclase (TE/CLC) domains (PubMed:16649078). Although duplicated ACP domains are common, pksA is the only fungal PKS containing 3 ACP domains (PubMed:16649078). The third (C-terminal) ACP is less similar in sequence to the first two and to that of the aflatoxin biosynthetic enzyme aflC (PubMed:16649078). It is possible that the third ACP domain was acquired by unequal recombination and has since diverged into a slightly different form that may have less functionality or altered specificity (PubMed:16649078).</text>
</comment>
<comment type="disruption phenotype">
    <text evidence="9">Impairs the production of dothistromin but still enables the conversion of exogenous aflatoxin precursors, including norsolorinic acid, into dothistromin (PubMed:16649078).</text>
</comment>
<gene>
    <name evidence="15" type="primary">pksA</name>
    <name type="ORF">DOTSEDRAFT_192192</name>
</gene>
<evidence type="ECO:0000250" key="1"/>
<evidence type="ECO:0000250" key="2">
    <source>
        <dbReference type="UniProtKB" id="Q12053"/>
    </source>
</evidence>
<evidence type="ECO:0000255" key="3"/>
<evidence type="ECO:0000255" key="4">
    <source>
        <dbReference type="PROSITE-ProRule" id="PRU00258"/>
    </source>
</evidence>
<evidence type="ECO:0000255" key="5">
    <source>
        <dbReference type="PROSITE-ProRule" id="PRU01348"/>
    </source>
</evidence>
<evidence type="ECO:0000255" key="6">
    <source>
        <dbReference type="PROSITE-ProRule" id="PRU01363"/>
    </source>
</evidence>
<evidence type="ECO:0000256" key="7">
    <source>
        <dbReference type="SAM" id="MobiDB-lite"/>
    </source>
</evidence>
<evidence type="ECO:0000269" key="8">
    <source>
    </source>
</evidence>
<evidence type="ECO:0000269" key="9">
    <source>
    </source>
</evidence>
<evidence type="ECO:0000269" key="10">
    <source>
    </source>
</evidence>
<evidence type="ECO:0000269" key="11">
    <source>
    </source>
</evidence>
<evidence type="ECO:0000269" key="12">
    <source>
    </source>
</evidence>
<evidence type="ECO:0000269" key="13">
    <source>
    </source>
</evidence>
<evidence type="ECO:0000269" key="14">
    <source>
    </source>
</evidence>
<evidence type="ECO:0000303" key="15">
    <source>
    </source>
</evidence>
<evidence type="ECO:0000303" key="16">
    <source>
    </source>
</evidence>
<evidence type="ECO:0000305" key="17">
    <source>
    </source>
</evidence>
<evidence type="ECO:0000305" key="18">
    <source>
    </source>
</evidence>
<evidence type="ECO:0000305" key="19">
    <source>
    </source>
</evidence>
<evidence type="ECO:0000305" key="20">
    <source>
    </source>
</evidence>
<name>PKSA_DOTSN</name>
<feature type="chain" id="PRO_0000443455" description="Norsolorinic acid synthase">
    <location>
        <begin position="1"/>
        <end position="2399"/>
    </location>
</feature>
<feature type="domain" description="Ketosynthase family 3 (KS3)" evidence="5">
    <location>
        <begin position="372"/>
        <end position="805"/>
    </location>
</feature>
<feature type="domain" description="PKS/mFAS DH" evidence="6">
    <location>
        <begin position="1340"/>
        <end position="1658"/>
    </location>
</feature>
<feature type="domain" description="Carrier 1" evidence="4">
    <location>
        <begin position="1733"/>
        <end position="1812"/>
    </location>
</feature>
<feature type="domain" description="Carrier 2" evidence="4">
    <location>
        <begin position="1877"/>
        <end position="1953"/>
    </location>
</feature>
<feature type="domain" description="Carrier 3" evidence="4">
    <location>
        <begin position="2020"/>
        <end position="2099"/>
    </location>
</feature>
<feature type="region of interest" description="Starter unit:ACP transacylase (SAT) domain" evidence="3">
    <location>
        <begin position="10"/>
        <end position="247"/>
    </location>
</feature>
<feature type="region of interest" description="Malonyl-CoA:ACP transacylase (MAT) domain" evidence="2 3">
    <location>
        <begin position="905"/>
        <end position="1192"/>
    </location>
</feature>
<feature type="region of interest" description="Disordered" evidence="7">
    <location>
        <begin position="1307"/>
        <end position="1327"/>
    </location>
</feature>
<feature type="region of interest" description="N-terminal hotdog fold" evidence="6">
    <location>
        <begin position="1340"/>
        <end position="1483"/>
    </location>
</feature>
<feature type="region of interest" description="Product template (PT) domain" evidence="3">
    <location>
        <begin position="1353"/>
        <end position="1658"/>
    </location>
</feature>
<feature type="region of interest" description="C-terminal hotdog fold" evidence="6">
    <location>
        <begin position="1510"/>
        <end position="1658"/>
    </location>
</feature>
<feature type="region of interest" description="Disordered" evidence="7">
    <location>
        <begin position="1665"/>
        <end position="1734"/>
    </location>
</feature>
<feature type="region of interest" description="Disordered" evidence="7">
    <location>
        <begin position="2098"/>
        <end position="2149"/>
    </location>
</feature>
<feature type="region of interest" description="Thioesterase/Claisen cyclase (TE/CLC) domain" evidence="3">
    <location>
        <begin position="2164"/>
        <end position="2393"/>
    </location>
</feature>
<feature type="compositionally biased region" description="Basic and acidic residues" evidence="7">
    <location>
        <begin position="1315"/>
        <end position="1327"/>
    </location>
</feature>
<feature type="compositionally biased region" description="Low complexity" evidence="7">
    <location>
        <begin position="1677"/>
        <end position="1698"/>
    </location>
</feature>
<feature type="compositionally biased region" description="Pro residues" evidence="7">
    <location>
        <begin position="1708"/>
        <end position="1723"/>
    </location>
</feature>
<feature type="compositionally biased region" description="Low complexity" evidence="7">
    <location>
        <begin position="1724"/>
        <end position="1734"/>
    </location>
</feature>
<feature type="compositionally biased region" description="Low complexity" evidence="7">
    <location>
        <begin position="2098"/>
        <end position="2115"/>
    </location>
</feature>
<feature type="compositionally biased region" description="Polar residues" evidence="7">
    <location>
        <begin position="2140"/>
        <end position="2149"/>
    </location>
</feature>
<feature type="active site" description="For beta-ketoacyl synthase activity" evidence="5">
    <location>
        <position position="544"/>
    </location>
</feature>
<feature type="active site" description="For beta-ketoacyl synthase activity" evidence="5">
    <location>
        <position position="679"/>
    </location>
</feature>
<feature type="active site" description="For beta-ketoacyl synthase activity" evidence="5">
    <location>
        <position position="722"/>
    </location>
</feature>
<feature type="active site" description="For acyl/malonyl transferase activity" evidence="1">
    <location>
        <position position="995"/>
    </location>
</feature>
<feature type="active site" description="Proton acceptor; for dehydratase activity" evidence="6">
    <location>
        <position position="1372"/>
    </location>
</feature>
<feature type="active site" description="Proton donor; for dehydratase activity" evidence="6">
    <location>
        <position position="1570"/>
    </location>
</feature>
<feature type="active site" description="For thioesterase activity" evidence="2">
    <location>
        <position position="2234"/>
    </location>
</feature>
<feature type="modified residue" description="O-(pantetheine 4'-phosphoryl)serine" evidence="4">
    <location>
        <position position="1770"/>
    </location>
</feature>
<feature type="modified residue" description="O-(pantetheine 4'-phosphoryl)serine" evidence="4">
    <location>
        <position position="1911"/>
    </location>
</feature>
<feature type="modified residue" description="O-(pantetheine 4'-phosphoryl)serine" evidence="4">
    <location>
        <position position="2057"/>
    </location>
</feature>
<protein>
    <recommendedName>
        <fullName evidence="2">Norsolorinic acid synthase</fullName>
        <shortName evidence="2">NSAS</shortName>
        <ecNumber evidence="2">2.3.1.221</ecNumber>
    </recommendedName>
    <alternativeName>
        <fullName evidence="15">Dothistromin biosynthesis polyketide synthase</fullName>
    </alternativeName>
    <alternativeName>
        <fullName evidence="15">Polyketide synthase A</fullName>
    </alternativeName>
</protein>